<comment type="similarity">
    <text evidence="2">Belongs to the SKA1 family.</text>
</comment>
<keyword id="KW-0175">Coiled coil</keyword>
<keyword id="KW-1185">Reference proteome</keyword>
<feature type="chain" id="PRO_0000373892" description="SKA complex subunit 1 homolog">
    <location>
        <begin position="1"/>
        <end position="276"/>
    </location>
</feature>
<feature type="coiled-coil region" evidence="1">
    <location>
        <begin position="48"/>
        <end position="78"/>
    </location>
</feature>
<name>SKA1_ORYSI</name>
<gene>
    <name type="ORF">OsI_26011</name>
</gene>
<evidence type="ECO:0000255" key="1"/>
<evidence type="ECO:0000305" key="2"/>
<proteinExistence type="inferred from homology"/>
<sequence length="276" mass="30944">MDAGDASRLGESLDAVSAAFQSRVMELQELVLARNMYPATAIPDLAAVDVSLTAMEAQLQAVRRRLQEEREAFPKAKKLVQQSLKQQRRLQLMLANMPTGMREDVFATPLEHNSSMMFPESLNFSSAVPEVRDHDLKIKEEPTAPPKKGRGPAPRWYISTEELDSLSSYMRGRLTLEKVNIAINEVASYADGNAHLVACPKKKLSEDTWEKALVLRDIAARESVKGKHFFLETDIKGPGLKLDTTGKAILTVLRHLGRFQETRIGHHRVFILSKQQ</sequence>
<organism>
    <name type="scientific">Oryza sativa subsp. indica</name>
    <name type="common">Rice</name>
    <dbReference type="NCBI Taxonomy" id="39946"/>
    <lineage>
        <taxon>Eukaryota</taxon>
        <taxon>Viridiplantae</taxon>
        <taxon>Streptophyta</taxon>
        <taxon>Embryophyta</taxon>
        <taxon>Tracheophyta</taxon>
        <taxon>Spermatophyta</taxon>
        <taxon>Magnoliopsida</taxon>
        <taxon>Liliopsida</taxon>
        <taxon>Poales</taxon>
        <taxon>Poaceae</taxon>
        <taxon>BOP clade</taxon>
        <taxon>Oryzoideae</taxon>
        <taxon>Oryzeae</taxon>
        <taxon>Oryzinae</taxon>
        <taxon>Oryza</taxon>
        <taxon>Oryza sativa</taxon>
    </lineage>
</organism>
<protein>
    <recommendedName>
        <fullName evidence="2">SKA complex subunit 1 homolog</fullName>
    </recommendedName>
    <alternativeName>
        <fullName evidence="2">Spindle and kinetochore-associated protein 1 homolog</fullName>
    </alternativeName>
</protein>
<dbReference type="EMBL" id="CM000132">
    <property type="protein sequence ID" value="EEC82038.1"/>
    <property type="molecule type" value="Genomic_DNA"/>
</dbReference>
<dbReference type="SMR" id="B8B624"/>
<dbReference type="STRING" id="39946.B8B624"/>
<dbReference type="EnsemblPlants" id="BGIOSGA025703-TA">
    <property type="protein sequence ID" value="BGIOSGA025703-PA"/>
    <property type="gene ID" value="BGIOSGA025703"/>
</dbReference>
<dbReference type="Gramene" id="BGIOSGA025703-TA">
    <property type="protein sequence ID" value="BGIOSGA025703-PA"/>
    <property type="gene ID" value="BGIOSGA025703"/>
</dbReference>
<dbReference type="HOGENOM" id="CLU_087423_0_0_1"/>
<dbReference type="OMA" id="PTGMRED"/>
<dbReference type="Proteomes" id="UP000007015">
    <property type="component" value="Chromosome 7"/>
</dbReference>
<dbReference type="GO" id="GO:0072686">
    <property type="term" value="C:mitotic spindle"/>
    <property type="evidence" value="ECO:0007669"/>
    <property type="project" value="TreeGrafter"/>
</dbReference>
<dbReference type="GO" id="GO:0000940">
    <property type="term" value="C:outer kinetochore"/>
    <property type="evidence" value="ECO:0007669"/>
    <property type="project" value="TreeGrafter"/>
</dbReference>
<dbReference type="GO" id="GO:0005876">
    <property type="term" value="C:spindle microtubule"/>
    <property type="evidence" value="ECO:0007669"/>
    <property type="project" value="TreeGrafter"/>
</dbReference>
<dbReference type="GO" id="GO:0008017">
    <property type="term" value="F:microtubule binding"/>
    <property type="evidence" value="ECO:0000250"/>
    <property type="project" value="UniProtKB"/>
</dbReference>
<dbReference type="GO" id="GO:0051315">
    <property type="term" value="P:attachment of mitotic spindle microtubules to kinetochore"/>
    <property type="evidence" value="ECO:0000250"/>
    <property type="project" value="UniProtKB"/>
</dbReference>
<dbReference type="GO" id="GO:0051301">
    <property type="term" value="P:cell division"/>
    <property type="evidence" value="ECO:0007669"/>
    <property type="project" value="InterPro"/>
</dbReference>
<dbReference type="GO" id="GO:0031110">
    <property type="term" value="P:regulation of microtubule polymerization or depolymerization"/>
    <property type="evidence" value="ECO:0007669"/>
    <property type="project" value="TreeGrafter"/>
</dbReference>
<dbReference type="FunFam" id="1.10.10.1890:FF:000002">
    <property type="entry name" value="Spindle and kinetochore-associated protein 1"/>
    <property type="match status" value="1"/>
</dbReference>
<dbReference type="Gene3D" id="1.10.10.1890">
    <property type="entry name" value="Ska1 microtubule binding domain-like"/>
    <property type="match status" value="1"/>
</dbReference>
<dbReference type="InterPro" id="IPR009829">
    <property type="entry name" value="SKA1"/>
</dbReference>
<dbReference type="InterPro" id="IPR042031">
    <property type="entry name" value="SKA1_MBD_sf"/>
</dbReference>
<dbReference type="PANTHER" id="PTHR28573">
    <property type="entry name" value="SPINDLE AND KINETOCHORE-ASSOCIATED PROTEIN 1"/>
    <property type="match status" value="1"/>
</dbReference>
<dbReference type="PANTHER" id="PTHR28573:SF1">
    <property type="entry name" value="SPINDLE AND KINETOCHORE-ASSOCIATED PROTEIN 1"/>
    <property type="match status" value="1"/>
</dbReference>
<dbReference type="Pfam" id="PF07160">
    <property type="entry name" value="SKA1"/>
    <property type="match status" value="1"/>
</dbReference>
<reference key="1">
    <citation type="journal article" date="2005" name="PLoS Biol.">
        <title>The genomes of Oryza sativa: a history of duplications.</title>
        <authorList>
            <person name="Yu J."/>
            <person name="Wang J."/>
            <person name="Lin W."/>
            <person name="Li S."/>
            <person name="Li H."/>
            <person name="Zhou J."/>
            <person name="Ni P."/>
            <person name="Dong W."/>
            <person name="Hu S."/>
            <person name="Zeng C."/>
            <person name="Zhang J."/>
            <person name="Zhang Y."/>
            <person name="Li R."/>
            <person name="Xu Z."/>
            <person name="Li S."/>
            <person name="Li X."/>
            <person name="Zheng H."/>
            <person name="Cong L."/>
            <person name="Lin L."/>
            <person name="Yin J."/>
            <person name="Geng J."/>
            <person name="Li G."/>
            <person name="Shi J."/>
            <person name="Liu J."/>
            <person name="Lv H."/>
            <person name="Li J."/>
            <person name="Wang J."/>
            <person name="Deng Y."/>
            <person name="Ran L."/>
            <person name="Shi X."/>
            <person name="Wang X."/>
            <person name="Wu Q."/>
            <person name="Li C."/>
            <person name="Ren X."/>
            <person name="Wang J."/>
            <person name="Wang X."/>
            <person name="Li D."/>
            <person name="Liu D."/>
            <person name="Zhang X."/>
            <person name="Ji Z."/>
            <person name="Zhao W."/>
            <person name="Sun Y."/>
            <person name="Zhang Z."/>
            <person name="Bao J."/>
            <person name="Han Y."/>
            <person name="Dong L."/>
            <person name="Ji J."/>
            <person name="Chen P."/>
            <person name="Wu S."/>
            <person name="Liu J."/>
            <person name="Xiao Y."/>
            <person name="Bu D."/>
            <person name="Tan J."/>
            <person name="Yang L."/>
            <person name="Ye C."/>
            <person name="Zhang J."/>
            <person name="Xu J."/>
            <person name="Zhou Y."/>
            <person name="Yu Y."/>
            <person name="Zhang B."/>
            <person name="Zhuang S."/>
            <person name="Wei H."/>
            <person name="Liu B."/>
            <person name="Lei M."/>
            <person name="Yu H."/>
            <person name="Li Y."/>
            <person name="Xu H."/>
            <person name="Wei S."/>
            <person name="He X."/>
            <person name="Fang L."/>
            <person name="Zhang Z."/>
            <person name="Zhang Y."/>
            <person name="Huang X."/>
            <person name="Su Z."/>
            <person name="Tong W."/>
            <person name="Li J."/>
            <person name="Tong Z."/>
            <person name="Li S."/>
            <person name="Ye J."/>
            <person name="Wang L."/>
            <person name="Fang L."/>
            <person name="Lei T."/>
            <person name="Chen C.-S."/>
            <person name="Chen H.-C."/>
            <person name="Xu Z."/>
            <person name="Li H."/>
            <person name="Huang H."/>
            <person name="Zhang F."/>
            <person name="Xu H."/>
            <person name="Li N."/>
            <person name="Zhao C."/>
            <person name="Li S."/>
            <person name="Dong L."/>
            <person name="Huang Y."/>
            <person name="Li L."/>
            <person name="Xi Y."/>
            <person name="Qi Q."/>
            <person name="Li W."/>
            <person name="Zhang B."/>
            <person name="Hu W."/>
            <person name="Zhang Y."/>
            <person name="Tian X."/>
            <person name="Jiao Y."/>
            <person name="Liang X."/>
            <person name="Jin J."/>
            <person name="Gao L."/>
            <person name="Zheng W."/>
            <person name="Hao B."/>
            <person name="Liu S.-M."/>
            <person name="Wang W."/>
            <person name="Yuan L."/>
            <person name="Cao M."/>
            <person name="McDermott J."/>
            <person name="Samudrala R."/>
            <person name="Wang J."/>
            <person name="Wong G.K.-S."/>
            <person name="Yang H."/>
        </authorList>
    </citation>
    <scope>NUCLEOTIDE SEQUENCE [LARGE SCALE GENOMIC DNA]</scope>
    <source>
        <strain>cv. 93-11</strain>
    </source>
</reference>
<accession>B8B624</accession>